<organism>
    <name type="scientific">Rickettsia akari (strain Hartford)</name>
    <dbReference type="NCBI Taxonomy" id="293614"/>
    <lineage>
        <taxon>Bacteria</taxon>
        <taxon>Pseudomonadati</taxon>
        <taxon>Pseudomonadota</taxon>
        <taxon>Alphaproteobacteria</taxon>
        <taxon>Rickettsiales</taxon>
        <taxon>Rickettsiaceae</taxon>
        <taxon>Rickettsieae</taxon>
        <taxon>Rickettsia</taxon>
        <taxon>spotted fever group</taxon>
    </lineage>
</organism>
<reference key="1">
    <citation type="submission" date="2007-09" db="EMBL/GenBank/DDBJ databases">
        <title>Complete genome sequence of Rickettsia akari.</title>
        <authorList>
            <person name="Madan A."/>
            <person name="Fahey J."/>
            <person name="Helton E."/>
            <person name="Ketteman M."/>
            <person name="Madan A."/>
            <person name="Rodrigues S."/>
            <person name="Sanchez A."/>
            <person name="Whiting M."/>
            <person name="Dasch G."/>
            <person name="Eremeeva M."/>
        </authorList>
    </citation>
    <scope>NUCLEOTIDE SEQUENCE [LARGE SCALE GENOMIC DNA]</scope>
    <source>
        <strain>Hartford</strain>
    </source>
</reference>
<dbReference type="EMBL" id="CP000847">
    <property type="protein sequence ID" value="ABV74499.1"/>
    <property type="molecule type" value="Genomic_DNA"/>
</dbReference>
<dbReference type="RefSeq" id="WP_012013369.1">
    <property type="nucleotide sequence ID" value="NC_009881.1"/>
</dbReference>
<dbReference type="SMR" id="A8GM74"/>
<dbReference type="STRING" id="293614.A1C_00845"/>
<dbReference type="KEGG" id="rak:A1C_00845"/>
<dbReference type="eggNOG" id="COG0335">
    <property type="taxonomic scope" value="Bacteria"/>
</dbReference>
<dbReference type="HOGENOM" id="CLU_103507_1_0_5"/>
<dbReference type="Proteomes" id="UP000006830">
    <property type="component" value="Chromosome"/>
</dbReference>
<dbReference type="GO" id="GO:0022625">
    <property type="term" value="C:cytosolic large ribosomal subunit"/>
    <property type="evidence" value="ECO:0007669"/>
    <property type="project" value="TreeGrafter"/>
</dbReference>
<dbReference type="GO" id="GO:0003735">
    <property type="term" value="F:structural constituent of ribosome"/>
    <property type="evidence" value="ECO:0007669"/>
    <property type="project" value="InterPro"/>
</dbReference>
<dbReference type="GO" id="GO:0006412">
    <property type="term" value="P:translation"/>
    <property type="evidence" value="ECO:0007669"/>
    <property type="project" value="UniProtKB-UniRule"/>
</dbReference>
<dbReference type="Gene3D" id="2.30.30.790">
    <property type="match status" value="1"/>
</dbReference>
<dbReference type="HAMAP" id="MF_00402">
    <property type="entry name" value="Ribosomal_bL19"/>
    <property type="match status" value="1"/>
</dbReference>
<dbReference type="InterPro" id="IPR001857">
    <property type="entry name" value="Ribosomal_bL19"/>
</dbReference>
<dbReference type="InterPro" id="IPR018257">
    <property type="entry name" value="Ribosomal_bL19_CS"/>
</dbReference>
<dbReference type="InterPro" id="IPR038657">
    <property type="entry name" value="Ribosomal_bL19_sf"/>
</dbReference>
<dbReference type="InterPro" id="IPR008991">
    <property type="entry name" value="Translation_prot_SH3-like_sf"/>
</dbReference>
<dbReference type="NCBIfam" id="TIGR01024">
    <property type="entry name" value="rplS_bact"/>
    <property type="match status" value="1"/>
</dbReference>
<dbReference type="PANTHER" id="PTHR15680:SF9">
    <property type="entry name" value="LARGE RIBOSOMAL SUBUNIT PROTEIN BL19M"/>
    <property type="match status" value="1"/>
</dbReference>
<dbReference type="PANTHER" id="PTHR15680">
    <property type="entry name" value="RIBOSOMAL PROTEIN L19"/>
    <property type="match status" value="1"/>
</dbReference>
<dbReference type="Pfam" id="PF01245">
    <property type="entry name" value="Ribosomal_L19"/>
    <property type="match status" value="1"/>
</dbReference>
<dbReference type="PIRSF" id="PIRSF002191">
    <property type="entry name" value="Ribosomal_L19"/>
    <property type="match status" value="1"/>
</dbReference>
<dbReference type="PRINTS" id="PR00061">
    <property type="entry name" value="RIBOSOMALL19"/>
</dbReference>
<dbReference type="SUPFAM" id="SSF50104">
    <property type="entry name" value="Translation proteins SH3-like domain"/>
    <property type="match status" value="1"/>
</dbReference>
<dbReference type="PROSITE" id="PS01015">
    <property type="entry name" value="RIBOSOMAL_L19"/>
    <property type="match status" value="1"/>
</dbReference>
<evidence type="ECO:0000255" key="1">
    <source>
        <dbReference type="HAMAP-Rule" id="MF_00402"/>
    </source>
</evidence>
<evidence type="ECO:0000305" key="2"/>
<keyword id="KW-0687">Ribonucleoprotein</keyword>
<keyword id="KW-0689">Ribosomal protein</keyword>
<name>RL19_RICAH</name>
<gene>
    <name evidence="1" type="primary">rplS</name>
    <name type="ordered locus">A1C_00845</name>
</gene>
<protein>
    <recommendedName>
        <fullName evidence="1">Large ribosomal subunit protein bL19</fullName>
    </recommendedName>
    <alternativeName>
        <fullName evidence="2">50S ribosomal protein L19</fullName>
    </alternativeName>
</protein>
<comment type="function">
    <text evidence="1">This protein is located at the 30S-50S ribosomal subunit interface and may play a role in the structure and function of the aminoacyl-tRNA binding site.</text>
</comment>
<comment type="similarity">
    <text evidence="1">Belongs to the bacterial ribosomal protein bL19 family.</text>
</comment>
<feature type="chain" id="PRO_1000049731" description="Large ribosomal subunit protein bL19">
    <location>
        <begin position="1"/>
        <end position="138"/>
    </location>
</feature>
<proteinExistence type="inferred from homology"/>
<accession>A8GM74</accession>
<sequence length="138" mass="15881">MNIIDHFEQENIAKLTANKQIPDFKAGDTVKVTVKVLDRSIEKDGKEKLTERFQAYEGLVIAKRNRGITSSFLVRKISHGEGVERRFMTYSPIVHSINVVKYGVVRRAKLYYLRNRSGKSARIKERHIHIAKTKTVKA</sequence>